<proteinExistence type="inferred from homology"/>
<comment type="function">
    <text evidence="1">Formation of pseudouridine at positions 38, 39 and 40 in the anticodon stem and loop of transfer RNAs.</text>
</comment>
<comment type="catalytic activity">
    <reaction evidence="1">
        <text>uridine(38/39/40) in tRNA = pseudouridine(38/39/40) in tRNA</text>
        <dbReference type="Rhea" id="RHEA:22376"/>
        <dbReference type="Rhea" id="RHEA-COMP:10085"/>
        <dbReference type="Rhea" id="RHEA-COMP:10087"/>
        <dbReference type="ChEBI" id="CHEBI:65314"/>
        <dbReference type="ChEBI" id="CHEBI:65315"/>
        <dbReference type="EC" id="5.4.99.12"/>
    </reaction>
</comment>
<comment type="subunit">
    <text evidence="1">Homodimer.</text>
</comment>
<comment type="similarity">
    <text evidence="1">Belongs to the tRNA pseudouridine synthase TruA family.</text>
</comment>
<sequence length="265" mass="29188">MDTAQKQRWAITLSYDGSRFYGWQKQADGVPTVQAALETALAQIAGEAVSTTVAGRTDTGVHATAQVVHFDTAAVRPVQAWVRGVNAHLPEGIAVLHARQVAPEFHARFDAYGRHYRYLLESAPVRSPLLKNRAGWTHLKLDIGQMRQAAALLIGEQDFSSFRAAECQAKSPVKTIYRADLTQSSGLVRLDLHGNAFLHHMVRNIMGALVYVGSGRLSVEGFAALIQERSRLKAPPTFMPDGLYLTGVDYPEAYGIIRPQIPEWL</sequence>
<gene>
    <name evidence="1" type="primary">truA</name>
    <name type="ordered locus">NMCC_0161</name>
</gene>
<name>TRUA_NEIM0</name>
<feature type="chain" id="PRO_1000077095" description="tRNA pseudouridine synthase A">
    <location>
        <begin position="1"/>
        <end position="265"/>
    </location>
</feature>
<feature type="active site" description="Nucleophile" evidence="1">
    <location>
        <position position="58"/>
    </location>
</feature>
<feature type="binding site" evidence="1">
    <location>
        <position position="116"/>
    </location>
    <ligand>
        <name>substrate</name>
    </ligand>
</feature>
<accession>A9M0B8</accession>
<reference key="1">
    <citation type="journal article" date="2008" name="Genomics">
        <title>Characterization of ST-4821 complex, a unique Neisseria meningitidis clone.</title>
        <authorList>
            <person name="Peng J."/>
            <person name="Yang L."/>
            <person name="Yang F."/>
            <person name="Yang J."/>
            <person name="Yan Y."/>
            <person name="Nie H."/>
            <person name="Zhang X."/>
            <person name="Xiong Z."/>
            <person name="Jiang Y."/>
            <person name="Cheng F."/>
            <person name="Xu X."/>
            <person name="Chen S."/>
            <person name="Sun L."/>
            <person name="Li W."/>
            <person name="Shen Y."/>
            <person name="Shao Z."/>
            <person name="Liang X."/>
            <person name="Xu J."/>
            <person name="Jin Q."/>
        </authorList>
    </citation>
    <scope>NUCLEOTIDE SEQUENCE [LARGE SCALE GENOMIC DNA]</scope>
    <source>
        <strain>053442</strain>
    </source>
</reference>
<dbReference type="EC" id="5.4.99.12" evidence="1"/>
<dbReference type="EMBL" id="CP000381">
    <property type="protein sequence ID" value="ABX72379.1"/>
    <property type="molecule type" value="Genomic_DNA"/>
</dbReference>
<dbReference type="RefSeq" id="WP_002243089.1">
    <property type="nucleotide sequence ID" value="NC_010120.1"/>
</dbReference>
<dbReference type="SMR" id="A9M0B8"/>
<dbReference type="KEGG" id="nmn:NMCC_0161"/>
<dbReference type="HOGENOM" id="CLU_014673_0_2_4"/>
<dbReference type="Proteomes" id="UP000001177">
    <property type="component" value="Chromosome"/>
</dbReference>
<dbReference type="GO" id="GO:0003723">
    <property type="term" value="F:RNA binding"/>
    <property type="evidence" value="ECO:0007669"/>
    <property type="project" value="InterPro"/>
</dbReference>
<dbReference type="GO" id="GO:0160147">
    <property type="term" value="F:tRNA pseudouridine(38-40) synthase activity"/>
    <property type="evidence" value="ECO:0007669"/>
    <property type="project" value="UniProtKB-EC"/>
</dbReference>
<dbReference type="GO" id="GO:0031119">
    <property type="term" value="P:tRNA pseudouridine synthesis"/>
    <property type="evidence" value="ECO:0007669"/>
    <property type="project" value="UniProtKB-UniRule"/>
</dbReference>
<dbReference type="CDD" id="cd02570">
    <property type="entry name" value="PseudoU_synth_EcTruA"/>
    <property type="match status" value="1"/>
</dbReference>
<dbReference type="FunFam" id="3.30.70.580:FF:000001">
    <property type="entry name" value="tRNA pseudouridine synthase A"/>
    <property type="match status" value="1"/>
</dbReference>
<dbReference type="FunFam" id="3.30.70.660:FF:000016">
    <property type="entry name" value="tRNA pseudouridine synthase A"/>
    <property type="match status" value="1"/>
</dbReference>
<dbReference type="Gene3D" id="3.30.70.660">
    <property type="entry name" value="Pseudouridine synthase I, catalytic domain, C-terminal subdomain"/>
    <property type="match status" value="1"/>
</dbReference>
<dbReference type="Gene3D" id="3.30.70.580">
    <property type="entry name" value="Pseudouridine synthase I, catalytic domain, N-terminal subdomain"/>
    <property type="match status" value="1"/>
</dbReference>
<dbReference type="HAMAP" id="MF_00171">
    <property type="entry name" value="TruA"/>
    <property type="match status" value="1"/>
</dbReference>
<dbReference type="InterPro" id="IPR020103">
    <property type="entry name" value="PsdUridine_synth_cat_dom_sf"/>
</dbReference>
<dbReference type="InterPro" id="IPR001406">
    <property type="entry name" value="PsdUridine_synth_TruA"/>
</dbReference>
<dbReference type="InterPro" id="IPR020097">
    <property type="entry name" value="PsdUridine_synth_TruA_a/b_dom"/>
</dbReference>
<dbReference type="InterPro" id="IPR020095">
    <property type="entry name" value="PsdUridine_synth_TruA_C"/>
</dbReference>
<dbReference type="InterPro" id="IPR020094">
    <property type="entry name" value="TruA/RsuA/RluB/E/F_N"/>
</dbReference>
<dbReference type="NCBIfam" id="TIGR00071">
    <property type="entry name" value="hisT_truA"/>
    <property type="match status" value="1"/>
</dbReference>
<dbReference type="PANTHER" id="PTHR11142">
    <property type="entry name" value="PSEUDOURIDYLATE SYNTHASE"/>
    <property type="match status" value="1"/>
</dbReference>
<dbReference type="PANTHER" id="PTHR11142:SF0">
    <property type="entry name" value="TRNA PSEUDOURIDINE SYNTHASE-LIKE 1"/>
    <property type="match status" value="1"/>
</dbReference>
<dbReference type="Pfam" id="PF01416">
    <property type="entry name" value="PseudoU_synth_1"/>
    <property type="match status" value="2"/>
</dbReference>
<dbReference type="PIRSF" id="PIRSF001430">
    <property type="entry name" value="tRNA_psdUrid_synth"/>
    <property type="match status" value="1"/>
</dbReference>
<dbReference type="SUPFAM" id="SSF55120">
    <property type="entry name" value="Pseudouridine synthase"/>
    <property type="match status" value="1"/>
</dbReference>
<evidence type="ECO:0000255" key="1">
    <source>
        <dbReference type="HAMAP-Rule" id="MF_00171"/>
    </source>
</evidence>
<organism>
    <name type="scientific">Neisseria meningitidis serogroup C (strain 053442)</name>
    <dbReference type="NCBI Taxonomy" id="374833"/>
    <lineage>
        <taxon>Bacteria</taxon>
        <taxon>Pseudomonadati</taxon>
        <taxon>Pseudomonadota</taxon>
        <taxon>Betaproteobacteria</taxon>
        <taxon>Neisseriales</taxon>
        <taxon>Neisseriaceae</taxon>
        <taxon>Neisseria</taxon>
    </lineage>
</organism>
<protein>
    <recommendedName>
        <fullName evidence="1">tRNA pseudouridine synthase A</fullName>
        <ecNumber evidence="1">5.4.99.12</ecNumber>
    </recommendedName>
    <alternativeName>
        <fullName evidence="1">tRNA pseudouridine(38-40) synthase</fullName>
    </alternativeName>
    <alternativeName>
        <fullName evidence="1">tRNA pseudouridylate synthase I</fullName>
    </alternativeName>
    <alternativeName>
        <fullName evidence="1">tRNA-uridine isomerase I</fullName>
    </alternativeName>
</protein>
<keyword id="KW-0413">Isomerase</keyword>
<keyword id="KW-0819">tRNA processing</keyword>